<proteinExistence type="inferred from homology"/>
<protein>
    <recommendedName>
        <fullName evidence="1">Phosphatidylglycerol--prolipoprotein diacylglyceryl transferase</fullName>
        <ecNumber evidence="1">2.5.1.145</ecNumber>
    </recommendedName>
</protein>
<evidence type="ECO:0000255" key="1">
    <source>
        <dbReference type="HAMAP-Rule" id="MF_01147"/>
    </source>
</evidence>
<dbReference type="EC" id="2.5.1.145" evidence="1"/>
<dbReference type="EMBL" id="AJ243915">
    <property type="protein sequence ID" value="CAB51945.1"/>
    <property type="molecule type" value="Genomic_DNA"/>
</dbReference>
<dbReference type="RefSeq" id="WP_029377666.1">
    <property type="nucleotide sequence ID" value="NZ_VBTJ01000001.1"/>
</dbReference>
<dbReference type="SMR" id="Q9S1H4"/>
<dbReference type="STRING" id="1288.AWC37_01580"/>
<dbReference type="GeneID" id="45497583"/>
<dbReference type="eggNOG" id="COG0682">
    <property type="taxonomic scope" value="Bacteria"/>
</dbReference>
<dbReference type="OrthoDB" id="871140at2"/>
<dbReference type="UniPathway" id="UPA00664"/>
<dbReference type="GO" id="GO:0005886">
    <property type="term" value="C:plasma membrane"/>
    <property type="evidence" value="ECO:0007669"/>
    <property type="project" value="UniProtKB-SubCell"/>
</dbReference>
<dbReference type="GO" id="GO:0008961">
    <property type="term" value="F:phosphatidylglycerol-prolipoprotein diacylglyceryl transferase activity"/>
    <property type="evidence" value="ECO:0007669"/>
    <property type="project" value="UniProtKB-UniRule"/>
</dbReference>
<dbReference type="GO" id="GO:0042158">
    <property type="term" value="P:lipoprotein biosynthetic process"/>
    <property type="evidence" value="ECO:0007669"/>
    <property type="project" value="UniProtKB-UniRule"/>
</dbReference>
<dbReference type="HAMAP" id="MF_01147">
    <property type="entry name" value="Lgt"/>
    <property type="match status" value="1"/>
</dbReference>
<dbReference type="InterPro" id="IPR001640">
    <property type="entry name" value="Lgt"/>
</dbReference>
<dbReference type="NCBIfam" id="TIGR00544">
    <property type="entry name" value="lgt"/>
    <property type="match status" value="1"/>
</dbReference>
<dbReference type="PANTHER" id="PTHR30589:SF0">
    <property type="entry name" value="PHOSPHATIDYLGLYCEROL--PROLIPOPROTEIN DIACYLGLYCERYL TRANSFERASE"/>
    <property type="match status" value="1"/>
</dbReference>
<dbReference type="PANTHER" id="PTHR30589">
    <property type="entry name" value="PROLIPOPROTEIN DIACYLGLYCERYL TRANSFERASE"/>
    <property type="match status" value="1"/>
</dbReference>
<dbReference type="Pfam" id="PF01790">
    <property type="entry name" value="LGT"/>
    <property type="match status" value="1"/>
</dbReference>
<dbReference type="PROSITE" id="PS01311">
    <property type="entry name" value="LGT"/>
    <property type="match status" value="1"/>
</dbReference>
<reference key="1">
    <citation type="journal article" date="2000" name="J. Bacteriol.">
        <title>Characterization of an HPr kinase mutant of Staphylococcus xylosus.</title>
        <authorList>
            <person name="Huynh P.L."/>
            <person name="Jankovic I."/>
            <person name="Schnell N."/>
            <person name="Brueckner R."/>
        </authorList>
    </citation>
    <scope>NUCLEOTIDE SEQUENCE [GENOMIC DNA]</scope>
    <source>
        <strain>DSM 20267 / Isolate C2A</strain>
    </source>
</reference>
<sequence length="278" mass="31764">MLTLNYIDPIAFELGPISVRWYGIIIAAGILLGYFIAQASVKKIGYDQDTLVDIIFWSAIFGFIVARIYFVIFQWPYYIQNPIEIPMIWHGGIAIHGGLIGGFVTGIIICKQKNINPFQIGDVIAPSMILGQGIGRWGNFMNHEAHGGPISRSVLENLHIPNFIIDNMYIDGKYYQPTFLYESLWDILGFVILILLRKHLRVGDTFCLYLIWYSIGRFFVEGMRTDSLMLTSDIRVAQLMSIILILIGVIIMIIRRVKYRSPRYKDVGPLSWPNPKVK</sequence>
<comment type="function">
    <text evidence="1">Catalyzes the transfer of the diacylglyceryl group from phosphatidylglycerol to the sulfhydryl group of the N-terminal cysteine of a prolipoprotein, the first step in the formation of mature lipoproteins.</text>
</comment>
<comment type="catalytic activity">
    <reaction evidence="1">
        <text>L-cysteinyl-[prolipoprotein] + a 1,2-diacyl-sn-glycero-3-phospho-(1'-sn-glycerol) = an S-1,2-diacyl-sn-glyceryl-L-cysteinyl-[prolipoprotein] + sn-glycerol 1-phosphate + H(+)</text>
        <dbReference type="Rhea" id="RHEA:56712"/>
        <dbReference type="Rhea" id="RHEA-COMP:14679"/>
        <dbReference type="Rhea" id="RHEA-COMP:14680"/>
        <dbReference type="ChEBI" id="CHEBI:15378"/>
        <dbReference type="ChEBI" id="CHEBI:29950"/>
        <dbReference type="ChEBI" id="CHEBI:57685"/>
        <dbReference type="ChEBI" id="CHEBI:64716"/>
        <dbReference type="ChEBI" id="CHEBI:140658"/>
        <dbReference type="EC" id="2.5.1.145"/>
    </reaction>
</comment>
<comment type="pathway">
    <text evidence="1">Protein modification; lipoprotein biosynthesis (diacylglyceryl transfer).</text>
</comment>
<comment type="subcellular location">
    <subcellularLocation>
        <location evidence="1">Cell membrane</location>
        <topology evidence="1">Multi-pass membrane protein</topology>
    </subcellularLocation>
</comment>
<comment type="similarity">
    <text evidence="1">Belongs to the Lgt family.</text>
</comment>
<accession>Q9S1H4</accession>
<gene>
    <name evidence="1" type="primary">lgt</name>
</gene>
<feature type="chain" id="PRO_0000172681" description="Phosphatidylglycerol--prolipoprotein diacylglyceryl transferase">
    <location>
        <begin position="1"/>
        <end position="278"/>
    </location>
</feature>
<feature type="transmembrane region" description="Helical" evidence="1">
    <location>
        <begin position="21"/>
        <end position="41"/>
    </location>
</feature>
<feature type="transmembrane region" description="Helical" evidence="1">
    <location>
        <begin position="54"/>
        <end position="74"/>
    </location>
</feature>
<feature type="transmembrane region" description="Helical" evidence="1">
    <location>
        <begin position="88"/>
        <end position="108"/>
    </location>
</feature>
<feature type="transmembrane region" description="Helical" evidence="1">
    <location>
        <begin position="176"/>
        <end position="196"/>
    </location>
</feature>
<feature type="transmembrane region" description="Helical" evidence="1">
    <location>
        <begin position="234"/>
        <end position="254"/>
    </location>
</feature>
<feature type="binding site" evidence="1">
    <location>
        <position position="136"/>
    </location>
    <ligand>
        <name>a 1,2-diacyl-sn-glycero-3-phospho-(1'-sn-glycerol)</name>
        <dbReference type="ChEBI" id="CHEBI:64716"/>
    </ligand>
</feature>
<keyword id="KW-1003">Cell membrane</keyword>
<keyword id="KW-0472">Membrane</keyword>
<keyword id="KW-0808">Transferase</keyword>
<keyword id="KW-0812">Transmembrane</keyword>
<keyword id="KW-1133">Transmembrane helix</keyword>
<name>LGT_STAXY</name>
<organism>
    <name type="scientific">Staphylococcus xylosus</name>
    <dbReference type="NCBI Taxonomy" id="1288"/>
    <lineage>
        <taxon>Bacteria</taxon>
        <taxon>Bacillati</taxon>
        <taxon>Bacillota</taxon>
        <taxon>Bacilli</taxon>
        <taxon>Bacillales</taxon>
        <taxon>Staphylococcaceae</taxon>
        <taxon>Staphylococcus</taxon>
    </lineage>
</organism>